<feature type="chain" id="PRO_1000054647" description="Large ribosomal subunit protein uL16">
    <location>
        <begin position="1"/>
        <end position="144"/>
    </location>
</feature>
<evidence type="ECO:0000255" key="1">
    <source>
        <dbReference type="HAMAP-Rule" id="MF_01342"/>
    </source>
</evidence>
<evidence type="ECO:0000305" key="2"/>
<comment type="function">
    <text evidence="1">Binds 23S rRNA and is also seen to make contacts with the A and possibly P site tRNAs.</text>
</comment>
<comment type="subunit">
    <text evidence="1">Part of the 50S ribosomal subunit.</text>
</comment>
<comment type="similarity">
    <text evidence="1">Belongs to the universal ribosomal protein uL16 family.</text>
</comment>
<keyword id="KW-0687">Ribonucleoprotein</keyword>
<keyword id="KW-0689">Ribosomal protein</keyword>
<keyword id="KW-0694">RNA-binding</keyword>
<keyword id="KW-0699">rRNA-binding</keyword>
<keyword id="KW-0820">tRNA-binding</keyword>
<dbReference type="EMBL" id="AM263198">
    <property type="protein sequence ID" value="CAK21993.1"/>
    <property type="molecule type" value="Genomic_DNA"/>
</dbReference>
<dbReference type="RefSeq" id="WP_003720943.1">
    <property type="nucleotide sequence ID" value="NC_008555.1"/>
</dbReference>
<dbReference type="SMR" id="A0ALW1"/>
<dbReference type="STRING" id="386043.lwe2575"/>
<dbReference type="GeneID" id="93240506"/>
<dbReference type="KEGG" id="lwe:lwe2575"/>
<dbReference type="eggNOG" id="COG0197">
    <property type="taxonomic scope" value="Bacteria"/>
</dbReference>
<dbReference type="HOGENOM" id="CLU_078858_2_1_9"/>
<dbReference type="OrthoDB" id="9802589at2"/>
<dbReference type="Proteomes" id="UP000000779">
    <property type="component" value="Chromosome"/>
</dbReference>
<dbReference type="GO" id="GO:0022625">
    <property type="term" value="C:cytosolic large ribosomal subunit"/>
    <property type="evidence" value="ECO:0007669"/>
    <property type="project" value="TreeGrafter"/>
</dbReference>
<dbReference type="GO" id="GO:0019843">
    <property type="term" value="F:rRNA binding"/>
    <property type="evidence" value="ECO:0007669"/>
    <property type="project" value="UniProtKB-UniRule"/>
</dbReference>
<dbReference type="GO" id="GO:0003735">
    <property type="term" value="F:structural constituent of ribosome"/>
    <property type="evidence" value="ECO:0007669"/>
    <property type="project" value="InterPro"/>
</dbReference>
<dbReference type="GO" id="GO:0000049">
    <property type="term" value="F:tRNA binding"/>
    <property type="evidence" value="ECO:0007669"/>
    <property type="project" value="UniProtKB-KW"/>
</dbReference>
<dbReference type="GO" id="GO:0006412">
    <property type="term" value="P:translation"/>
    <property type="evidence" value="ECO:0007669"/>
    <property type="project" value="UniProtKB-UniRule"/>
</dbReference>
<dbReference type="CDD" id="cd01433">
    <property type="entry name" value="Ribosomal_L16_L10e"/>
    <property type="match status" value="1"/>
</dbReference>
<dbReference type="FunFam" id="3.90.1170.10:FF:000001">
    <property type="entry name" value="50S ribosomal protein L16"/>
    <property type="match status" value="1"/>
</dbReference>
<dbReference type="Gene3D" id="3.90.1170.10">
    <property type="entry name" value="Ribosomal protein L10e/L16"/>
    <property type="match status" value="1"/>
</dbReference>
<dbReference type="HAMAP" id="MF_01342">
    <property type="entry name" value="Ribosomal_uL16"/>
    <property type="match status" value="1"/>
</dbReference>
<dbReference type="InterPro" id="IPR047873">
    <property type="entry name" value="Ribosomal_uL16"/>
</dbReference>
<dbReference type="InterPro" id="IPR000114">
    <property type="entry name" value="Ribosomal_uL16_bact-type"/>
</dbReference>
<dbReference type="InterPro" id="IPR020798">
    <property type="entry name" value="Ribosomal_uL16_CS"/>
</dbReference>
<dbReference type="InterPro" id="IPR016180">
    <property type="entry name" value="Ribosomal_uL16_dom"/>
</dbReference>
<dbReference type="InterPro" id="IPR036920">
    <property type="entry name" value="Ribosomal_uL16_sf"/>
</dbReference>
<dbReference type="NCBIfam" id="TIGR01164">
    <property type="entry name" value="rplP_bact"/>
    <property type="match status" value="1"/>
</dbReference>
<dbReference type="PANTHER" id="PTHR12220">
    <property type="entry name" value="50S/60S RIBOSOMAL PROTEIN L16"/>
    <property type="match status" value="1"/>
</dbReference>
<dbReference type="PANTHER" id="PTHR12220:SF13">
    <property type="entry name" value="LARGE RIBOSOMAL SUBUNIT PROTEIN UL16M"/>
    <property type="match status" value="1"/>
</dbReference>
<dbReference type="Pfam" id="PF00252">
    <property type="entry name" value="Ribosomal_L16"/>
    <property type="match status" value="1"/>
</dbReference>
<dbReference type="PRINTS" id="PR00060">
    <property type="entry name" value="RIBOSOMALL16"/>
</dbReference>
<dbReference type="SUPFAM" id="SSF54686">
    <property type="entry name" value="Ribosomal protein L16p/L10e"/>
    <property type="match status" value="1"/>
</dbReference>
<dbReference type="PROSITE" id="PS00586">
    <property type="entry name" value="RIBOSOMAL_L16_1"/>
    <property type="match status" value="1"/>
</dbReference>
<dbReference type="PROSITE" id="PS00701">
    <property type="entry name" value="RIBOSOMAL_L16_2"/>
    <property type="match status" value="1"/>
</dbReference>
<protein>
    <recommendedName>
        <fullName evidence="1">Large ribosomal subunit protein uL16</fullName>
    </recommendedName>
    <alternativeName>
        <fullName evidence="2">50S ribosomal protein L16</fullName>
    </alternativeName>
</protein>
<name>RL16_LISW6</name>
<gene>
    <name evidence="1" type="primary">rplP</name>
    <name type="ordered locus">lwe2575</name>
</gene>
<organism>
    <name type="scientific">Listeria welshimeri serovar 6b (strain ATCC 35897 / DSM 20650 / CCUG 15529 / CIP 8149 / NCTC 11857 / SLCC 5334 / V8)</name>
    <dbReference type="NCBI Taxonomy" id="386043"/>
    <lineage>
        <taxon>Bacteria</taxon>
        <taxon>Bacillati</taxon>
        <taxon>Bacillota</taxon>
        <taxon>Bacilli</taxon>
        <taxon>Bacillales</taxon>
        <taxon>Listeriaceae</taxon>
        <taxon>Listeria</taxon>
    </lineage>
</organism>
<reference key="1">
    <citation type="journal article" date="2006" name="J. Bacteriol.">
        <title>Whole-genome sequence of Listeria welshimeri reveals common steps in genome reduction with Listeria innocua as compared to Listeria monocytogenes.</title>
        <authorList>
            <person name="Hain T."/>
            <person name="Steinweg C."/>
            <person name="Kuenne C.T."/>
            <person name="Billion A."/>
            <person name="Ghai R."/>
            <person name="Chatterjee S.S."/>
            <person name="Domann E."/>
            <person name="Kaerst U."/>
            <person name="Goesmann A."/>
            <person name="Bekel T."/>
            <person name="Bartels D."/>
            <person name="Kaiser O."/>
            <person name="Meyer F."/>
            <person name="Puehler A."/>
            <person name="Weisshaar B."/>
            <person name="Wehland J."/>
            <person name="Liang C."/>
            <person name="Dandekar T."/>
            <person name="Lampidis R."/>
            <person name="Kreft J."/>
            <person name="Goebel W."/>
            <person name="Chakraborty T."/>
        </authorList>
    </citation>
    <scope>NUCLEOTIDE SEQUENCE [LARGE SCALE GENOMIC DNA]</scope>
    <source>
        <strain>ATCC 35897 / DSM 20650 / CCUG 15529 / CIP 8149 / NCTC 11857 / SLCC 5334 / V8</strain>
    </source>
</reference>
<accession>A0ALW1</accession>
<sequence length="144" mass="16138">MLVPKRVKYRREFRGNMRGRAKGGTEVAFGEYGLQAVEASWITNRQIEAARIAMTRYMKRGGKVWIKIFPHKSYTSKPIGVRMGKGKGAPEGWVSPVKRGKIMFEIAGVPEDVAREALRLAAHKLPVKTKIVKREEIGGEANES</sequence>
<proteinExistence type="inferred from homology"/>